<comment type="function">
    <text evidence="1">Catalyzes the specific phosphorylation of 1,6-anhydro-N-acetylmuramic acid (anhMurNAc) with the simultaneous cleavage of the 1,6-anhydro ring, generating MurNAc-6-P. Is required for the utilization of anhMurNAc either imported from the medium or derived from its own cell wall murein, and thus plays a role in cell wall recycling.</text>
</comment>
<comment type="catalytic activity">
    <reaction evidence="1">
        <text>1,6-anhydro-N-acetyl-beta-muramate + ATP + H2O = N-acetyl-D-muramate 6-phosphate + ADP + H(+)</text>
        <dbReference type="Rhea" id="RHEA:24952"/>
        <dbReference type="ChEBI" id="CHEBI:15377"/>
        <dbReference type="ChEBI" id="CHEBI:15378"/>
        <dbReference type="ChEBI" id="CHEBI:30616"/>
        <dbReference type="ChEBI" id="CHEBI:58690"/>
        <dbReference type="ChEBI" id="CHEBI:58722"/>
        <dbReference type="ChEBI" id="CHEBI:456216"/>
        <dbReference type="EC" id="2.7.1.170"/>
    </reaction>
</comment>
<comment type="pathway">
    <text evidence="1">Amino-sugar metabolism; 1,6-anhydro-N-acetylmuramate degradation.</text>
</comment>
<comment type="pathway">
    <text evidence="1">Cell wall biogenesis; peptidoglycan recycling.</text>
</comment>
<comment type="similarity">
    <text evidence="1">Belongs to the anhydro-N-acetylmuramic acid kinase family.</text>
</comment>
<gene>
    <name evidence="1" type="primary">anmK</name>
    <name type="ordered locus">Bcenmc03_0649</name>
</gene>
<sequence length="382" mass="40115">MPQRQPQPAHPADGIYFGLMSGTSMDGVDGVAVRFEAGRAPVVLAEAFVGFAQSLRDALFALQQPGDNEIDRESLAANALVARYAVCCHELQRTAGLSRDEIRAIGVHGQTVRHRPERGYTRQLNNPALLAELTQVDVIADFRSRDVAAGGHGAPLAPAFHATVFGAPGETRVVCNLGGISNITILPGGDGDVRGFDCGPANALIDAWATRHLGKPYDDGGKFAARGTVQASLLDALLDEPYFTAPPPKSTGRDLFNPAWLDARLAAFPQVAPEDVQATLTALTAVSVAREIAQHAPGCKAVFVCGGGARNPVLLDALRHALREAGVPASVDTTAALGVPPQQVEALAFAWLAYRFTARQPGNLATVTGAAGNRVLGALYPR</sequence>
<protein>
    <recommendedName>
        <fullName evidence="1">Anhydro-N-acetylmuramic acid kinase</fullName>
        <ecNumber evidence="1">2.7.1.170</ecNumber>
    </recommendedName>
    <alternativeName>
        <fullName evidence="1">AnhMurNAc kinase</fullName>
    </alternativeName>
</protein>
<reference key="1">
    <citation type="submission" date="2008-02" db="EMBL/GenBank/DDBJ databases">
        <title>Complete sequence of chromosome 1 of Burkholderia cenocepacia MC0-3.</title>
        <authorList>
            <person name="Copeland A."/>
            <person name="Lucas S."/>
            <person name="Lapidus A."/>
            <person name="Barry K."/>
            <person name="Bruce D."/>
            <person name="Goodwin L."/>
            <person name="Glavina del Rio T."/>
            <person name="Dalin E."/>
            <person name="Tice H."/>
            <person name="Pitluck S."/>
            <person name="Chain P."/>
            <person name="Malfatti S."/>
            <person name="Shin M."/>
            <person name="Vergez L."/>
            <person name="Schmutz J."/>
            <person name="Larimer F."/>
            <person name="Land M."/>
            <person name="Hauser L."/>
            <person name="Kyrpides N."/>
            <person name="Mikhailova N."/>
            <person name="Tiedje J."/>
            <person name="Richardson P."/>
        </authorList>
    </citation>
    <scope>NUCLEOTIDE SEQUENCE [LARGE SCALE GENOMIC DNA]</scope>
    <source>
        <strain>MC0-3</strain>
    </source>
</reference>
<organism>
    <name type="scientific">Burkholderia orbicola (strain MC0-3)</name>
    <dbReference type="NCBI Taxonomy" id="406425"/>
    <lineage>
        <taxon>Bacteria</taxon>
        <taxon>Pseudomonadati</taxon>
        <taxon>Pseudomonadota</taxon>
        <taxon>Betaproteobacteria</taxon>
        <taxon>Burkholderiales</taxon>
        <taxon>Burkholderiaceae</taxon>
        <taxon>Burkholderia</taxon>
        <taxon>Burkholderia cepacia complex</taxon>
        <taxon>Burkholderia orbicola</taxon>
    </lineage>
</organism>
<evidence type="ECO:0000255" key="1">
    <source>
        <dbReference type="HAMAP-Rule" id="MF_01270"/>
    </source>
</evidence>
<accession>B1JVU7</accession>
<dbReference type="EC" id="2.7.1.170" evidence="1"/>
<dbReference type="EMBL" id="CP000958">
    <property type="protein sequence ID" value="ACA89827.1"/>
    <property type="molecule type" value="Genomic_DNA"/>
</dbReference>
<dbReference type="RefSeq" id="WP_012327902.1">
    <property type="nucleotide sequence ID" value="NC_010508.1"/>
</dbReference>
<dbReference type="SMR" id="B1JVU7"/>
<dbReference type="GeneID" id="83047449"/>
<dbReference type="KEGG" id="bcm:Bcenmc03_0649"/>
<dbReference type="HOGENOM" id="CLU_038782_0_0_4"/>
<dbReference type="UniPathway" id="UPA00343"/>
<dbReference type="UniPathway" id="UPA00544"/>
<dbReference type="Proteomes" id="UP000002169">
    <property type="component" value="Chromosome 1"/>
</dbReference>
<dbReference type="GO" id="GO:0005524">
    <property type="term" value="F:ATP binding"/>
    <property type="evidence" value="ECO:0007669"/>
    <property type="project" value="UniProtKB-UniRule"/>
</dbReference>
<dbReference type="GO" id="GO:0016301">
    <property type="term" value="F:kinase activity"/>
    <property type="evidence" value="ECO:0007669"/>
    <property type="project" value="UniProtKB-KW"/>
</dbReference>
<dbReference type="GO" id="GO:0016773">
    <property type="term" value="F:phosphotransferase activity, alcohol group as acceptor"/>
    <property type="evidence" value="ECO:0007669"/>
    <property type="project" value="UniProtKB-UniRule"/>
</dbReference>
<dbReference type="GO" id="GO:0097175">
    <property type="term" value="P:1,6-anhydro-N-acetyl-beta-muramic acid catabolic process"/>
    <property type="evidence" value="ECO:0007669"/>
    <property type="project" value="UniProtKB-UniRule"/>
</dbReference>
<dbReference type="GO" id="GO:0006040">
    <property type="term" value="P:amino sugar metabolic process"/>
    <property type="evidence" value="ECO:0007669"/>
    <property type="project" value="InterPro"/>
</dbReference>
<dbReference type="GO" id="GO:0009254">
    <property type="term" value="P:peptidoglycan turnover"/>
    <property type="evidence" value="ECO:0007669"/>
    <property type="project" value="UniProtKB-UniRule"/>
</dbReference>
<dbReference type="CDD" id="cd24050">
    <property type="entry name" value="ASKHA_NBD_ANMK"/>
    <property type="match status" value="1"/>
</dbReference>
<dbReference type="Gene3D" id="3.30.420.40">
    <property type="match status" value="2"/>
</dbReference>
<dbReference type="HAMAP" id="MF_01270">
    <property type="entry name" value="AnhMurNAc_kinase"/>
    <property type="match status" value="1"/>
</dbReference>
<dbReference type="InterPro" id="IPR005338">
    <property type="entry name" value="Anhydro_N_Ac-Mur_kinase"/>
</dbReference>
<dbReference type="InterPro" id="IPR043129">
    <property type="entry name" value="ATPase_NBD"/>
</dbReference>
<dbReference type="NCBIfam" id="NF007139">
    <property type="entry name" value="PRK09585.1-3"/>
    <property type="match status" value="1"/>
</dbReference>
<dbReference type="NCBIfam" id="NF007140">
    <property type="entry name" value="PRK09585.1-4"/>
    <property type="match status" value="1"/>
</dbReference>
<dbReference type="PANTHER" id="PTHR30605">
    <property type="entry name" value="ANHYDRO-N-ACETYLMURAMIC ACID KINASE"/>
    <property type="match status" value="1"/>
</dbReference>
<dbReference type="PANTHER" id="PTHR30605:SF0">
    <property type="entry name" value="ANHYDRO-N-ACETYLMURAMIC ACID KINASE"/>
    <property type="match status" value="1"/>
</dbReference>
<dbReference type="Pfam" id="PF03702">
    <property type="entry name" value="AnmK"/>
    <property type="match status" value="1"/>
</dbReference>
<dbReference type="SUPFAM" id="SSF53067">
    <property type="entry name" value="Actin-like ATPase domain"/>
    <property type="match status" value="1"/>
</dbReference>
<keyword id="KW-0067">ATP-binding</keyword>
<keyword id="KW-0119">Carbohydrate metabolism</keyword>
<keyword id="KW-0418">Kinase</keyword>
<keyword id="KW-0547">Nucleotide-binding</keyword>
<keyword id="KW-0808">Transferase</keyword>
<feature type="chain" id="PRO_1000165154" description="Anhydro-N-acetylmuramic acid kinase">
    <location>
        <begin position="1"/>
        <end position="382"/>
    </location>
</feature>
<feature type="binding site" evidence="1">
    <location>
        <begin position="22"/>
        <end position="29"/>
    </location>
    <ligand>
        <name>ATP</name>
        <dbReference type="ChEBI" id="CHEBI:30616"/>
    </ligand>
</feature>
<name>ANMK_BURO0</name>
<proteinExistence type="inferred from homology"/>